<protein>
    <recommendedName>
        <fullName evidence="7">Ribosome-associated protein oga1</fullName>
    </recommendedName>
    <alternativeName>
        <fullName evidence="6">Ortholog of G4-associated protein 1</fullName>
    </alternativeName>
    <alternativeName>
        <fullName>Ribosome clamping factor oga1</fullName>
    </alternativeName>
</protein>
<keyword id="KW-0963">Cytoplasm</keyword>
<keyword id="KW-0597">Phosphoprotein</keyword>
<keyword id="KW-1185">Reference proteome</keyword>
<proteinExistence type="evidence at protein level"/>
<accession>O42914</accession>
<accession>P78760</accession>
<accession>Q1L854</accession>
<dbReference type="EMBL" id="D89108">
    <property type="protein sequence ID" value="BAA13771.1"/>
    <property type="status" value="ALT_INIT"/>
    <property type="molecule type" value="mRNA"/>
</dbReference>
<dbReference type="EMBL" id="CU329671">
    <property type="protein sequence ID" value="CAA16859.1"/>
    <property type="molecule type" value="Genomic_DNA"/>
</dbReference>
<dbReference type="PIR" id="T39544">
    <property type="entry name" value="T39544"/>
</dbReference>
<dbReference type="PIR" id="T42085">
    <property type="entry name" value="T42085"/>
</dbReference>
<dbReference type="RefSeq" id="NP_596781.1">
    <property type="nucleotide sequence ID" value="NM_001023802.2"/>
</dbReference>
<dbReference type="BioGRID" id="276295">
    <property type="interactions" value="42"/>
</dbReference>
<dbReference type="FunCoup" id="O42914">
    <property type="interactions" value="214"/>
</dbReference>
<dbReference type="IntAct" id="O42914">
    <property type="interactions" value="1"/>
</dbReference>
<dbReference type="STRING" id="284812.O42914"/>
<dbReference type="iPTMnet" id="O42914"/>
<dbReference type="PaxDb" id="4896-SPBC16A3.08c.1"/>
<dbReference type="EnsemblFungi" id="SPBC16A3.08c.1">
    <property type="protein sequence ID" value="SPBC16A3.08c.1:pep"/>
    <property type="gene ID" value="SPBC16A3.08c"/>
</dbReference>
<dbReference type="GeneID" id="2539743"/>
<dbReference type="KEGG" id="spo:2539743"/>
<dbReference type="PomBase" id="SPBC16A3.08c">
    <property type="gene designation" value="oga1"/>
</dbReference>
<dbReference type="VEuPathDB" id="FungiDB:SPBC16A3.08c"/>
<dbReference type="eggNOG" id="ENOG502S4DF">
    <property type="taxonomic scope" value="Eukaryota"/>
</dbReference>
<dbReference type="HOGENOM" id="CLU_980580_0_0_1"/>
<dbReference type="InParanoid" id="O42914"/>
<dbReference type="OMA" id="KATERGW"/>
<dbReference type="PhylomeDB" id="O42914"/>
<dbReference type="Reactome" id="R-SPO-114608">
    <property type="pathway name" value="Platelet degranulation"/>
</dbReference>
<dbReference type="PRO" id="PR:O42914"/>
<dbReference type="Proteomes" id="UP000002485">
    <property type="component" value="Chromosome II"/>
</dbReference>
<dbReference type="GO" id="GO:0005737">
    <property type="term" value="C:cytoplasm"/>
    <property type="evidence" value="ECO:0000318"/>
    <property type="project" value="GO_Central"/>
</dbReference>
<dbReference type="GO" id="GO:0005829">
    <property type="term" value="C:cytosol"/>
    <property type="evidence" value="ECO:0000314"/>
    <property type="project" value="PomBase"/>
</dbReference>
<dbReference type="GO" id="GO:0005634">
    <property type="term" value="C:nucleus"/>
    <property type="evidence" value="ECO:0000318"/>
    <property type="project" value="GO_Central"/>
</dbReference>
<dbReference type="GO" id="GO:0051880">
    <property type="term" value="F:G-quadruplex DNA binding"/>
    <property type="evidence" value="ECO:0000314"/>
    <property type="project" value="PomBase"/>
</dbReference>
<dbReference type="GO" id="GO:0003723">
    <property type="term" value="F:RNA binding"/>
    <property type="evidence" value="ECO:0000318"/>
    <property type="project" value="GO_Central"/>
</dbReference>
<dbReference type="GO" id="GO:1990611">
    <property type="term" value="P:regulation of cytoplasmic translational initiation in response to stress"/>
    <property type="evidence" value="ECO:0000266"/>
    <property type="project" value="PomBase"/>
</dbReference>
<dbReference type="GO" id="GO:0031929">
    <property type="term" value="P:TOR signaling"/>
    <property type="evidence" value="ECO:0000266"/>
    <property type="project" value="PomBase"/>
</dbReference>
<dbReference type="Gene3D" id="6.10.140.1040">
    <property type="match status" value="1"/>
</dbReference>
<dbReference type="InterPro" id="IPR039764">
    <property type="entry name" value="HABP4/SERBP1-like"/>
</dbReference>
<dbReference type="InterPro" id="IPR006861">
    <property type="entry name" value="HABP4_PAIRBP1-bd"/>
</dbReference>
<dbReference type="InterPro" id="IPR019084">
    <property type="entry name" value="STM1-like_N"/>
</dbReference>
<dbReference type="PANTHER" id="PTHR12299:SF17">
    <property type="entry name" value="AT19571P-RELATED"/>
    <property type="match status" value="1"/>
</dbReference>
<dbReference type="PANTHER" id="PTHR12299">
    <property type="entry name" value="HYALURONIC ACID-BINDING PROTEIN 4"/>
    <property type="match status" value="1"/>
</dbReference>
<dbReference type="Pfam" id="PF09598">
    <property type="entry name" value="Stm1_N"/>
    <property type="match status" value="1"/>
</dbReference>
<dbReference type="SMART" id="SM01233">
    <property type="entry name" value="HABP4_PAI-RBP1"/>
    <property type="match status" value="1"/>
</dbReference>
<comment type="function">
    <text evidence="1 5">Ribosome preservation factor that protect a small pool of nontranslating, vacant ribosomes in cells under nutrient starvation conditions. Under nutrient-limiting conditions, cells reduce ribosome biogenesis and degrade ribosomes via autophagy (ribophagy) or proteasomal degradation. To avoid excessive degradation during starvation, STM1 binds to and protects 80S ribosomes from proteasomal degradation. Under nutrient-sufficient conditions, TORC1 phosphorylates and inhibits STM1 to prevent formation of dormant 80S ribosomes. Acts as an inhibitor of mRNA translation by promoting ribosome hibernation: clamps the two ribosomal subunits, thereby preventing their dissociation, and inhibits translation by excluding mRNA-binding. Acts via its association with eEF2, promoting ribosome stabilization and storage in an inactive state. May also repress translation by preventing association of eEF3 with ribosomes (By similarity). Binds specifically G4 quadruplex (these are four-stranded right-handed helices, stabilized by guanine base quartets) and purine motif triplex (characterized by a third, antiparallel purine-rich DNA strand located within the major groove of a homopurine stretch of duplex DNA) nucleic acid structures. These structures may be present at telomeres or in rRNAs. Extends chronological lifespan when overexpressed (PubMed:23640107).</text>
</comment>
<comment type="subunit">
    <text evidence="1 3">Associates with mature 80S ribosomes. Binds to the head domain of the 40S ribosomal subunit and prevents mRNA binding by inserting its alpha-helix domain towards the mRNA entry tunnel at the decoding site, where it blocks the binding of tRNA and mRNA at the A- and P-sites. Interacts with eEF2; interaction sequesters eEF2 at the A-site of the ribosome, thereby blocking the interaction sites of the mRNA-tRNA complex, promoting ribosome stabilization and hibernation (By similarity). Interacts with sad1 (PubMed:14655046).</text>
</comment>
<comment type="subcellular location">
    <subcellularLocation>
        <location evidence="3">Cytoplasm</location>
    </subcellularLocation>
</comment>
<comment type="PTM">
    <text evidence="1">Phosphorylation by TORC1 upon nutrient replenishment inhibits STM1 and causes its release from dormant ribosomes.</text>
</comment>
<comment type="similarity">
    <text evidence="7">Belongs to the STM1 family.</text>
</comment>
<comment type="sequence caution" evidence="7">
    <conflict type="erroneous initiation">
        <sequence resource="EMBL-CDS" id="BAA13771"/>
    </conflict>
    <text>Extended N-terminus.</text>
</comment>
<reference key="1">
    <citation type="journal article" date="1997" name="DNA Res.">
        <title>Identification of open reading frames in Schizosaccharomyces pombe cDNAs.</title>
        <authorList>
            <person name="Yoshioka S."/>
            <person name="Kato K."/>
            <person name="Nakai K."/>
            <person name="Okayama H."/>
            <person name="Nojima H."/>
        </authorList>
    </citation>
    <scope>NUCLEOTIDE SEQUENCE [LARGE SCALE MRNA]</scope>
    <source>
        <strain>PR745</strain>
    </source>
</reference>
<reference key="2">
    <citation type="journal article" date="2002" name="Nature">
        <title>The genome sequence of Schizosaccharomyces pombe.</title>
        <authorList>
            <person name="Wood V."/>
            <person name="Gwilliam R."/>
            <person name="Rajandream M.A."/>
            <person name="Lyne M.H."/>
            <person name="Lyne R."/>
            <person name="Stewart A."/>
            <person name="Sgouros J.G."/>
            <person name="Peat N."/>
            <person name="Hayles J."/>
            <person name="Baker S.G."/>
            <person name="Basham D."/>
            <person name="Bowman S."/>
            <person name="Brooks K."/>
            <person name="Brown D."/>
            <person name="Brown S."/>
            <person name="Chillingworth T."/>
            <person name="Churcher C.M."/>
            <person name="Collins M."/>
            <person name="Connor R."/>
            <person name="Cronin A."/>
            <person name="Davis P."/>
            <person name="Feltwell T."/>
            <person name="Fraser A."/>
            <person name="Gentles S."/>
            <person name="Goble A."/>
            <person name="Hamlin N."/>
            <person name="Harris D.E."/>
            <person name="Hidalgo J."/>
            <person name="Hodgson G."/>
            <person name="Holroyd S."/>
            <person name="Hornsby T."/>
            <person name="Howarth S."/>
            <person name="Huckle E.J."/>
            <person name="Hunt S."/>
            <person name="Jagels K."/>
            <person name="James K.D."/>
            <person name="Jones L."/>
            <person name="Jones M."/>
            <person name="Leather S."/>
            <person name="McDonald S."/>
            <person name="McLean J."/>
            <person name="Mooney P."/>
            <person name="Moule S."/>
            <person name="Mungall K.L."/>
            <person name="Murphy L.D."/>
            <person name="Niblett D."/>
            <person name="Odell C."/>
            <person name="Oliver K."/>
            <person name="O'Neil S."/>
            <person name="Pearson D."/>
            <person name="Quail M.A."/>
            <person name="Rabbinowitsch E."/>
            <person name="Rutherford K.M."/>
            <person name="Rutter S."/>
            <person name="Saunders D."/>
            <person name="Seeger K."/>
            <person name="Sharp S."/>
            <person name="Skelton J."/>
            <person name="Simmonds M.N."/>
            <person name="Squares R."/>
            <person name="Squares S."/>
            <person name="Stevens K."/>
            <person name="Taylor K."/>
            <person name="Taylor R.G."/>
            <person name="Tivey A."/>
            <person name="Walsh S.V."/>
            <person name="Warren T."/>
            <person name="Whitehead S."/>
            <person name="Woodward J.R."/>
            <person name="Volckaert G."/>
            <person name="Aert R."/>
            <person name="Robben J."/>
            <person name="Grymonprez B."/>
            <person name="Weltjens I."/>
            <person name="Vanstreels E."/>
            <person name="Rieger M."/>
            <person name="Schaefer M."/>
            <person name="Mueller-Auer S."/>
            <person name="Gabel C."/>
            <person name="Fuchs M."/>
            <person name="Duesterhoeft A."/>
            <person name="Fritzc C."/>
            <person name="Holzer E."/>
            <person name="Moestl D."/>
            <person name="Hilbert H."/>
            <person name="Borzym K."/>
            <person name="Langer I."/>
            <person name="Beck A."/>
            <person name="Lehrach H."/>
            <person name="Reinhardt R."/>
            <person name="Pohl T.M."/>
            <person name="Eger P."/>
            <person name="Zimmermann W."/>
            <person name="Wedler H."/>
            <person name="Wambutt R."/>
            <person name="Purnelle B."/>
            <person name="Goffeau A."/>
            <person name="Cadieu E."/>
            <person name="Dreano S."/>
            <person name="Gloux S."/>
            <person name="Lelaure V."/>
            <person name="Mottier S."/>
            <person name="Galibert F."/>
            <person name="Aves S.J."/>
            <person name="Xiang Z."/>
            <person name="Hunt C."/>
            <person name="Moore K."/>
            <person name="Hurst S.M."/>
            <person name="Lucas M."/>
            <person name="Rochet M."/>
            <person name="Gaillardin C."/>
            <person name="Tallada V.A."/>
            <person name="Garzon A."/>
            <person name="Thode G."/>
            <person name="Daga R.R."/>
            <person name="Cruzado L."/>
            <person name="Jimenez J."/>
            <person name="Sanchez M."/>
            <person name="del Rey F."/>
            <person name="Benito J."/>
            <person name="Dominguez A."/>
            <person name="Revuelta J.L."/>
            <person name="Moreno S."/>
            <person name="Armstrong J."/>
            <person name="Forsburg S.L."/>
            <person name="Cerutti L."/>
            <person name="Lowe T."/>
            <person name="McCombie W.R."/>
            <person name="Paulsen I."/>
            <person name="Potashkin J."/>
            <person name="Shpakovski G.V."/>
            <person name="Ussery D."/>
            <person name="Barrell B.G."/>
            <person name="Nurse P."/>
        </authorList>
    </citation>
    <scope>NUCLEOTIDE SEQUENCE [LARGE SCALE GENOMIC DNA]</scope>
    <source>
        <strain>972 / ATCC 24843</strain>
    </source>
</reference>
<reference key="3">
    <citation type="journal article" date="2004" name="Mol. Genet. Genomics">
        <title>Two-hybrid search for proteins that interact with Sad1 and Kms1, two membrane-bound components of the spindle pole body in fission yeast.</title>
        <authorList>
            <person name="Miki F."/>
            <person name="Kurabayashi A."/>
            <person name="Tange Y."/>
            <person name="Okazaki K."/>
            <person name="Shimanuki M."/>
            <person name="Niwa O."/>
        </authorList>
    </citation>
    <scope>INTERACTION WITH SAD1</scope>
    <scope>SUBCELLULAR LOCATION</scope>
</reference>
<reference key="4">
    <citation type="journal article" date="2008" name="J. Proteome Res.">
        <title>Phosphoproteome analysis of fission yeast.</title>
        <authorList>
            <person name="Wilson-Grady J.T."/>
            <person name="Villen J."/>
            <person name="Gygi S.P."/>
        </authorList>
    </citation>
    <scope>PHOSPHORYLATION [LARGE SCALE ANALYSIS] AT SER-37; SER-51; THR-160; SER-162 AND THR-166</scope>
    <scope>IDENTIFICATION BY MASS SPECTROMETRY</scope>
</reference>
<reference key="5">
    <citation type="journal article" date="2013" name="Mol. Genet. Genomics">
        <title>Screening for long-lived genes identifies Oga1, a guanine-quadruplex associated protein that affects the chronological lifespan of the fission yeast Schizosaccharomyces pombe.</title>
        <authorList>
            <person name="Ohtsuka H."/>
            <person name="Ogawa S."/>
            <person name="Kawamura H."/>
            <person name="Sakai E."/>
            <person name="Ichinose K."/>
            <person name="Murakami H."/>
            <person name="Aiba H."/>
        </authorList>
    </citation>
    <scope>FUNCTION</scope>
</reference>
<feature type="chain" id="PRO_0000116512" description="Ribosome-associated protein oga1">
    <location>
        <begin position="1"/>
        <end position="284"/>
    </location>
</feature>
<feature type="region of interest" description="Disordered" evidence="2">
    <location>
        <begin position="1"/>
        <end position="284"/>
    </location>
</feature>
<feature type="compositionally biased region" description="Basic and acidic residues" evidence="2">
    <location>
        <begin position="22"/>
        <end position="36"/>
    </location>
</feature>
<feature type="compositionally biased region" description="Basic and acidic residues" evidence="2">
    <location>
        <begin position="52"/>
        <end position="73"/>
    </location>
</feature>
<feature type="compositionally biased region" description="Basic and acidic residues" evidence="2">
    <location>
        <begin position="119"/>
        <end position="141"/>
    </location>
</feature>
<feature type="compositionally biased region" description="Basic and acidic residues" evidence="2">
    <location>
        <begin position="172"/>
        <end position="186"/>
    </location>
</feature>
<feature type="compositionally biased region" description="Basic and acidic residues" evidence="2">
    <location>
        <begin position="194"/>
        <end position="209"/>
    </location>
</feature>
<feature type="compositionally biased region" description="Low complexity" evidence="2">
    <location>
        <begin position="214"/>
        <end position="224"/>
    </location>
</feature>
<feature type="compositionally biased region" description="Basic and acidic residues" evidence="2">
    <location>
        <begin position="226"/>
        <end position="237"/>
    </location>
</feature>
<feature type="compositionally biased region" description="Low complexity" evidence="2">
    <location>
        <begin position="245"/>
        <end position="254"/>
    </location>
</feature>
<feature type="compositionally biased region" description="Polar residues" evidence="2">
    <location>
        <begin position="263"/>
        <end position="277"/>
    </location>
</feature>
<feature type="modified residue" description="Phosphoserine" evidence="4">
    <location>
        <position position="37"/>
    </location>
</feature>
<feature type="modified residue" description="Phosphoserine" evidence="4">
    <location>
        <position position="51"/>
    </location>
</feature>
<feature type="modified residue" description="Phosphothreonine" evidence="4">
    <location>
        <position position="160"/>
    </location>
</feature>
<feature type="modified residue" description="Phosphoserine" evidence="4">
    <location>
        <position position="162"/>
    </location>
</feature>
<feature type="modified residue" description="Phosphothreonine" evidence="4">
    <location>
        <position position="166"/>
    </location>
</feature>
<feature type="sequence conflict" description="In Ref. 1; BAA13771." evidence="7" ref="1">
    <original>RA</original>
    <variation>LL</variation>
    <location>
        <begin position="115"/>
        <end position="116"/>
    </location>
</feature>
<organism>
    <name type="scientific">Schizosaccharomyces pombe (strain 972 / ATCC 24843)</name>
    <name type="common">Fission yeast</name>
    <dbReference type="NCBI Taxonomy" id="284812"/>
    <lineage>
        <taxon>Eukaryota</taxon>
        <taxon>Fungi</taxon>
        <taxon>Dikarya</taxon>
        <taxon>Ascomycota</taxon>
        <taxon>Taphrinomycotina</taxon>
        <taxon>Schizosaccharomycetes</taxon>
        <taxon>Schizosaccharomycetales</taxon>
        <taxon>Schizosaccharomycetaceae</taxon>
        <taxon>Schizosaccharomyces</taxon>
    </lineage>
</organism>
<name>OGA1_SCHPO</name>
<sequence>MSVASKNLFDLLGEETPAATTTEKKTAASRDKKRSDSPPVPRELVAQSTTSRKRDPNQPTPRERTVNKKADQPRRRRQAPQGNEAFAREGKEARANNAAHPVDATGAPSNRRNARARRGREFDRHSQTGRVDTKKATERGWGDLVNSAANPDVAENEGNTPSGAQTPAAEEENVKTLDEYLSERKSAAKPVGRTVEKLENATKVEKSAPEELFASLKKSASQKKSAAKESKPKKVLLDIEQTFTARPARGGRPNRAPRRGPSETASKTQQAPPTLSETDFPALA</sequence>
<evidence type="ECO:0000250" key="1">
    <source>
        <dbReference type="UniProtKB" id="P39015"/>
    </source>
</evidence>
<evidence type="ECO:0000256" key="2">
    <source>
        <dbReference type="SAM" id="MobiDB-lite"/>
    </source>
</evidence>
<evidence type="ECO:0000269" key="3">
    <source>
    </source>
</evidence>
<evidence type="ECO:0000269" key="4">
    <source>
    </source>
</evidence>
<evidence type="ECO:0000269" key="5">
    <source>
    </source>
</evidence>
<evidence type="ECO:0000303" key="6">
    <source>
    </source>
</evidence>
<evidence type="ECO:0000305" key="7"/>
<gene>
    <name evidence="6" type="primary">oga1</name>
    <name type="ORF">SPBC16A3.08c</name>
</gene>